<accession>P0AE90</accession>
<accession>P16244</accession>
<accession>P76777</accession>
<keyword id="KW-0963">Cytoplasm</keyword>
<keyword id="KW-0238">DNA-binding</keyword>
<keyword id="KW-0597">Phosphoprotein</keyword>
<keyword id="KW-1185">Reference proteome</keyword>
<keyword id="KW-0804">Transcription</keyword>
<keyword id="KW-0805">Transcription regulation</keyword>
<keyword id="KW-0902">Two-component regulatory system</keyword>
<feature type="chain" id="PRO_0000081080" description="Transcriptional regulatory protein CpxR">
    <location>
        <begin position="1"/>
        <end position="232"/>
    </location>
</feature>
<feature type="domain" description="Response regulatory" evidence="2">
    <location>
        <begin position="3"/>
        <end position="115"/>
    </location>
</feature>
<feature type="DNA-binding region" description="OmpR/PhoB-type" evidence="3">
    <location>
        <begin position="131"/>
        <end position="230"/>
    </location>
</feature>
<feature type="modified residue" description="4-aspartylphosphate" evidence="2">
    <location>
        <position position="51"/>
    </location>
</feature>
<protein>
    <recommendedName>
        <fullName>Transcriptional regulatory protein CpxR</fullName>
    </recommendedName>
</protein>
<evidence type="ECO:0000250" key="1"/>
<evidence type="ECO:0000255" key="2">
    <source>
        <dbReference type="PROSITE-ProRule" id="PRU00169"/>
    </source>
</evidence>
<evidence type="ECO:0000255" key="3">
    <source>
        <dbReference type="PROSITE-ProRule" id="PRU01091"/>
    </source>
</evidence>
<evidence type="ECO:0000305" key="4"/>
<reference key="1">
    <citation type="journal article" date="2002" name="Nucleic Acids Res.">
        <title>Genome sequence of Shigella flexneri 2a: insights into pathogenicity through comparison with genomes of Escherichia coli K12 and O157.</title>
        <authorList>
            <person name="Jin Q."/>
            <person name="Yuan Z."/>
            <person name="Xu J."/>
            <person name="Wang Y."/>
            <person name="Shen Y."/>
            <person name="Lu W."/>
            <person name="Wang J."/>
            <person name="Liu H."/>
            <person name="Yang J."/>
            <person name="Yang F."/>
            <person name="Zhang X."/>
            <person name="Zhang J."/>
            <person name="Yang G."/>
            <person name="Wu H."/>
            <person name="Qu D."/>
            <person name="Dong J."/>
            <person name="Sun L."/>
            <person name="Xue Y."/>
            <person name="Zhao A."/>
            <person name="Gao Y."/>
            <person name="Zhu J."/>
            <person name="Kan B."/>
            <person name="Ding K."/>
            <person name="Chen S."/>
            <person name="Cheng H."/>
            <person name="Yao Z."/>
            <person name="He B."/>
            <person name="Chen R."/>
            <person name="Ma D."/>
            <person name="Qiang B."/>
            <person name="Wen Y."/>
            <person name="Hou Y."/>
            <person name="Yu J."/>
        </authorList>
    </citation>
    <scope>NUCLEOTIDE SEQUENCE [LARGE SCALE GENOMIC DNA]</scope>
    <source>
        <strain>301 / Serotype 2a</strain>
    </source>
</reference>
<reference key="2">
    <citation type="journal article" date="2003" name="Infect. Immun.">
        <title>Complete genome sequence and comparative genomics of Shigella flexneri serotype 2a strain 2457T.</title>
        <authorList>
            <person name="Wei J."/>
            <person name="Goldberg M.B."/>
            <person name="Burland V."/>
            <person name="Venkatesan M.M."/>
            <person name="Deng W."/>
            <person name="Fournier G."/>
            <person name="Mayhew G.F."/>
            <person name="Plunkett G. III"/>
            <person name="Rose D.J."/>
            <person name="Darling A."/>
            <person name="Mau B."/>
            <person name="Perna N.T."/>
            <person name="Payne S.M."/>
            <person name="Runyen-Janecky L.J."/>
            <person name="Zhou S."/>
            <person name="Schwartz D.C."/>
            <person name="Blattner F.R."/>
        </authorList>
    </citation>
    <scope>NUCLEOTIDE SEQUENCE [LARGE SCALE GENOMIC DNA]</scope>
    <source>
        <strain>ATCC 700930 / 2457T / Serotype 2a</strain>
    </source>
</reference>
<name>CPXR_SHIFL</name>
<organism>
    <name type="scientific">Shigella flexneri</name>
    <dbReference type="NCBI Taxonomy" id="623"/>
    <lineage>
        <taxon>Bacteria</taxon>
        <taxon>Pseudomonadati</taxon>
        <taxon>Pseudomonadota</taxon>
        <taxon>Gammaproteobacteria</taxon>
        <taxon>Enterobacterales</taxon>
        <taxon>Enterobacteriaceae</taxon>
        <taxon>Shigella</taxon>
    </lineage>
</organism>
<proteinExistence type="inferred from homology"/>
<comment type="function">
    <text evidence="1">Member of the two-component regulatory system CpxA/CpxR. This system combats a variety of extracytoplasmic protein-mediated toxicities. It performs this function by increasing the synthesis of the periplasmic protease, DegP as well as that of CpxP protein (By similarity).</text>
</comment>
<comment type="subcellular location">
    <subcellularLocation>
        <location evidence="4">Cytoplasm</location>
    </subcellularLocation>
</comment>
<comment type="PTM">
    <text evidence="4">Phosphorylated by CpxA.</text>
</comment>
<sequence>MNKILLVDDDRELTSLLKELLEMEGFNVIVAHDGEQALDLLDDSIDLLLLDVMMPKKNGIDTLKALRQTHQTPVIMLTARGSELDRVLGLELGADDYLPKPFNDRELVARIRAILRRSHWSEQQQNNDNGSPTLEVDALVLNPGRQEASFDGQTLELTGTEFTLLYLLAQHLGQVVSREHLSQEVLGKRLTPFDRAIDMHISNLRRKLPDRKDGHPWFKTLRGRGYLMVSAS</sequence>
<gene>
    <name type="primary">cpxR</name>
    <name type="ordered locus">SF3991</name>
    <name type="ordered locus">S3757</name>
</gene>
<dbReference type="EMBL" id="AE005674">
    <property type="protein sequence ID" value="AAN45425.1"/>
    <property type="molecule type" value="Genomic_DNA"/>
</dbReference>
<dbReference type="EMBL" id="AE014073">
    <property type="protein sequence ID" value="AAP18775.1"/>
    <property type="molecule type" value="Genomic_DNA"/>
</dbReference>
<dbReference type="RefSeq" id="NP_709718.1">
    <property type="nucleotide sequence ID" value="NC_004337.2"/>
</dbReference>
<dbReference type="RefSeq" id="WP_001033722.1">
    <property type="nucleotide sequence ID" value="NZ_WPGW01000012.1"/>
</dbReference>
<dbReference type="SMR" id="P0AE90"/>
<dbReference type="STRING" id="198214.SF3991"/>
<dbReference type="PaxDb" id="198214-SF3991"/>
<dbReference type="GeneID" id="1026856"/>
<dbReference type="GeneID" id="93778026"/>
<dbReference type="KEGG" id="sfl:SF3991"/>
<dbReference type="KEGG" id="sfx:S3757"/>
<dbReference type="PATRIC" id="fig|198214.7.peg.4703"/>
<dbReference type="HOGENOM" id="CLU_000445_30_4_6"/>
<dbReference type="Proteomes" id="UP000001006">
    <property type="component" value="Chromosome"/>
</dbReference>
<dbReference type="Proteomes" id="UP000002673">
    <property type="component" value="Chromosome"/>
</dbReference>
<dbReference type="GO" id="GO:0005829">
    <property type="term" value="C:cytosol"/>
    <property type="evidence" value="ECO:0007669"/>
    <property type="project" value="TreeGrafter"/>
</dbReference>
<dbReference type="GO" id="GO:0032993">
    <property type="term" value="C:protein-DNA complex"/>
    <property type="evidence" value="ECO:0007669"/>
    <property type="project" value="TreeGrafter"/>
</dbReference>
<dbReference type="GO" id="GO:0000156">
    <property type="term" value="F:phosphorelay response regulator activity"/>
    <property type="evidence" value="ECO:0007669"/>
    <property type="project" value="TreeGrafter"/>
</dbReference>
<dbReference type="GO" id="GO:0000976">
    <property type="term" value="F:transcription cis-regulatory region binding"/>
    <property type="evidence" value="ECO:0007669"/>
    <property type="project" value="TreeGrafter"/>
</dbReference>
<dbReference type="GO" id="GO:0006355">
    <property type="term" value="P:regulation of DNA-templated transcription"/>
    <property type="evidence" value="ECO:0007669"/>
    <property type="project" value="InterPro"/>
</dbReference>
<dbReference type="CDD" id="cd17623">
    <property type="entry name" value="REC_OmpR_CpxR"/>
    <property type="match status" value="1"/>
</dbReference>
<dbReference type="CDD" id="cd00383">
    <property type="entry name" value="trans_reg_C"/>
    <property type="match status" value="1"/>
</dbReference>
<dbReference type="FunFam" id="1.10.10.10:FF:000077">
    <property type="entry name" value="DNA-binding transcriptional regulator CpxR"/>
    <property type="match status" value="1"/>
</dbReference>
<dbReference type="FunFam" id="3.40.50.2300:FF:000032">
    <property type="entry name" value="DNA-binding transcriptional regulator CpxR"/>
    <property type="match status" value="1"/>
</dbReference>
<dbReference type="Gene3D" id="3.40.50.2300">
    <property type="match status" value="1"/>
</dbReference>
<dbReference type="Gene3D" id="6.10.250.690">
    <property type="match status" value="1"/>
</dbReference>
<dbReference type="Gene3D" id="1.10.10.10">
    <property type="entry name" value="Winged helix-like DNA-binding domain superfamily/Winged helix DNA-binding domain"/>
    <property type="match status" value="1"/>
</dbReference>
<dbReference type="InterPro" id="IPR011006">
    <property type="entry name" value="CheY-like_superfamily"/>
</dbReference>
<dbReference type="InterPro" id="IPR001867">
    <property type="entry name" value="OmpR/PhoB-type_DNA-bd"/>
</dbReference>
<dbReference type="InterPro" id="IPR001789">
    <property type="entry name" value="Sig_transdc_resp-reg_receiver"/>
</dbReference>
<dbReference type="InterPro" id="IPR039420">
    <property type="entry name" value="WalR-like"/>
</dbReference>
<dbReference type="InterPro" id="IPR036388">
    <property type="entry name" value="WH-like_DNA-bd_sf"/>
</dbReference>
<dbReference type="NCBIfam" id="NF008199">
    <property type="entry name" value="PRK10955.1"/>
    <property type="match status" value="1"/>
</dbReference>
<dbReference type="PANTHER" id="PTHR48111">
    <property type="entry name" value="REGULATOR OF RPOS"/>
    <property type="match status" value="1"/>
</dbReference>
<dbReference type="PANTHER" id="PTHR48111:SF39">
    <property type="entry name" value="TRANSCRIPTIONAL REGULATORY PROTEIN CPXR"/>
    <property type="match status" value="1"/>
</dbReference>
<dbReference type="Pfam" id="PF00072">
    <property type="entry name" value="Response_reg"/>
    <property type="match status" value="1"/>
</dbReference>
<dbReference type="Pfam" id="PF00486">
    <property type="entry name" value="Trans_reg_C"/>
    <property type="match status" value="1"/>
</dbReference>
<dbReference type="SMART" id="SM00448">
    <property type="entry name" value="REC"/>
    <property type="match status" value="1"/>
</dbReference>
<dbReference type="SMART" id="SM00862">
    <property type="entry name" value="Trans_reg_C"/>
    <property type="match status" value="1"/>
</dbReference>
<dbReference type="SUPFAM" id="SSF52172">
    <property type="entry name" value="CheY-like"/>
    <property type="match status" value="1"/>
</dbReference>
<dbReference type="PROSITE" id="PS51755">
    <property type="entry name" value="OMPR_PHOB"/>
    <property type="match status" value="1"/>
</dbReference>
<dbReference type="PROSITE" id="PS50110">
    <property type="entry name" value="RESPONSE_REGULATORY"/>
    <property type="match status" value="1"/>
</dbReference>